<keyword id="KW-0256">Endoplasmic reticulum</keyword>
<keyword id="KW-0325">Glycoprotein</keyword>
<keyword id="KW-0414">Isoprene biosynthesis</keyword>
<keyword id="KW-0472">Membrane</keyword>
<keyword id="KW-0521">NADP</keyword>
<keyword id="KW-0560">Oxidoreductase</keyword>
<keyword id="KW-0812">Transmembrane</keyword>
<keyword id="KW-1133">Transmembrane helix</keyword>
<organism>
    <name type="scientific">Agrotis ipsilon</name>
    <name type="common">Black cutworm moth</name>
    <dbReference type="NCBI Taxonomy" id="56364"/>
    <lineage>
        <taxon>Eukaryota</taxon>
        <taxon>Metazoa</taxon>
        <taxon>Ecdysozoa</taxon>
        <taxon>Arthropoda</taxon>
        <taxon>Hexapoda</taxon>
        <taxon>Insecta</taxon>
        <taxon>Pterygota</taxon>
        <taxon>Neoptera</taxon>
        <taxon>Endopterygota</taxon>
        <taxon>Lepidoptera</taxon>
        <taxon>Glossata</taxon>
        <taxon>Ditrysia</taxon>
        <taxon>Noctuoidea</taxon>
        <taxon>Noctuidae</taxon>
        <taxon>Noctuinae</taxon>
        <taxon>Noctuini</taxon>
        <taxon>Agrotis</taxon>
    </lineage>
</organism>
<reference key="1">
    <citation type="journal article" date="2000" name="Insect Mol. Biol.">
        <title>Molecular cloning and structural analysis of 3-hydroxy-3-methylglutaryl coenzyme A reductase of the moth Agrotis ipsilon.</title>
        <authorList>
            <person name="Duportets L."/>
            <person name="Belles X."/>
            <person name="Rossignol F."/>
            <person name="Couillaud F."/>
        </authorList>
    </citation>
    <scope>NUCLEOTIDE SEQUENCE [MRNA]</scope>
</reference>
<feature type="chain" id="PRO_0000114429" description="3-hydroxy-3-methylglutaryl-coenzyme A reductase">
    <location>
        <begin position="1"/>
        <end position="833"/>
    </location>
</feature>
<feature type="transmembrane region" description="Helical" evidence="2">
    <location>
        <begin position="10"/>
        <end position="32"/>
    </location>
</feature>
<feature type="transmembrane region" description="Helical" evidence="2">
    <location>
        <begin position="91"/>
        <end position="117"/>
    </location>
</feature>
<feature type="transmembrane region" description="Helical" evidence="2">
    <location>
        <begin position="160"/>
        <end position="180"/>
    </location>
</feature>
<feature type="transmembrane region" description="Helical" evidence="2">
    <location>
        <begin position="301"/>
        <end position="321"/>
    </location>
</feature>
<feature type="region of interest" description="Linker">
    <location>
        <begin position="322"/>
        <end position="419"/>
    </location>
</feature>
<feature type="region of interest" description="Disordered" evidence="4">
    <location>
        <begin position="347"/>
        <end position="374"/>
    </location>
</feature>
<feature type="region of interest" description="Catalytic">
    <location>
        <begin position="420"/>
        <end position="833"/>
    </location>
</feature>
<feature type="compositionally biased region" description="Polar residues" evidence="4">
    <location>
        <begin position="354"/>
        <end position="365"/>
    </location>
</feature>
<feature type="active site" description="Charge relay system" evidence="1">
    <location>
        <position position="504"/>
    </location>
</feature>
<feature type="active site" description="Charge relay system" evidence="1">
    <location>
        <position position="635"/>
    </location>
</feature>
<feature type="active site" description="Charge relay system" evidence="1">
    <location>
        <position position="711"/>
    </location>
</feature>
<feature type="active site" description="Proton donor" evidence="3">
    <location>
        <position position="809"/>
    </location>
</feature>
<feature type="glycosylation site" description="N-linked (GlcNAc...) asparagine" evidence="2">
    <location>
        <position position="680"/>
    </location>
</feature>
<feature type="glycosylation site" description="N-linked (GlcNAc...) asparagine" evidence="2">
    <location>
        <position position="715"/>
    </location>
</feature>
<feature type="glycosylation site" description="N-linked (GlcNAc...) asparagine" evidence="2">
    <location>
        <position position="720"/>
    </location>
</feature>
<feature type="glycosylation site" description="N-linked (GlcNAc...) asparagine" evidence="2">
    <location>
        <position position="813"/>
    </location>
</feature>
<feature type="glycosylation site" description="N-linked (GlcNAc...) asparagine" evidence="2">
    <location>
        <position position="825"/>
    </location>
</feature>
<evidence type="ECO:0000250" key="1"/>
<evidence type="ECO:0000255" key="2"/>
<evidence type="ECO:0000255" key="3">
    <source>
        <dbReference type="PROSITE-ProRule" id="PRU10003"/>
    </source>
</evidence>
<evidence type="ECO:0000256" key="4">
    <source>
        <dbReference type="SAM" id="MobiDB-lite"/>
    </source>
</evidence>
<evidence type="ECO:0000305" key="5"/>
<protein>
    <recommendedName>
        <fullName>3-hydroxy-3-methylglutaryl-coenzyme A reductase</fullName>
        <shortName>HMG-CoA reductase</shortName>
        <ecNumber>1.1.1.34</ecNumber>
    </recommendedName>
</protein>
<comment type="function">
    <text evidence="1">Synthesis of mevalonate for the production of non-sterol isoprenoids, which are essential for growth differentiation.</text>
</comment>
<comment type="catalytic activity">
    <reaction evidence="3">
        <text>(R)-mevalonate + 2 NADP(+) + CoA = (3S)-3-hydroxy-3-methylglutaryl-CoA + 2 NADPH + 2 H(+)</text>
        <dbReference type="Rhea" id="RHEA:15989"/>
        <dbReference type="ChEBI" id="CHEBI:15378"/>
        <dbReference type="ChEBI" id="CHEBI:36464"/>
        <dbReference type="ChEBI" id="CHEBI:43074"/>
        <dbReference type="ChEBI" id="CHEBI:57287"/>
        <dbReference type="ChEBI" id="CHEBI:57783"/>
        <dbReference type="ChEBI" id="CHEBI:58349"/>
        <dbReference type="EC" id="1.1.1.34"/>
    </reaction>
</comment>
<comment type="activity regulation">
    <text>The activity of HMG-CoA-reductase is suppressed by exogenous mevalonate.</text>
</comment>
<comment type="pathway">
    <text>Metabolic intermediate biosynthesis; (R)-mevalonate biosynthesis; (R)-mevalonate from acetyl-CoA: step 3/3.</text>
</comment>
<comment type="subcellular location">
    <subcellularLocation>
        <location>Endoplasmic reticulum membrane</location>
        <topology>Multi-pass membrane protein</topology>
    </subcellularLocation>
</comment>
<comment type="similarity">
    <text evidence="5">Belongs to the HMG-CoA reductase family.</text>
</comment>
<gene>
    <name type="primary">HMGR</name>
</gene>
<dbReference type="EC" id="1.1.1.34"/>
<dbReference type="EMBL" id="AJ009675">
    <property type="protein sequence ID" value="CAA08775.1"/>
    <property type="molecule type" value="mRNA"/>
</dbReference>
<dbReference type="SMR" id="O76819"/>
<dbReference type="GlyCosmos" id="O76819">
    <property type="glycosylation" value="5 sites, No reported glycans"/>
</dbReference>
<dbReference type="UniPathway" id="UPA00058">
    <property type="reaction ID" value="UER00103"/>
</dbReference>
<dbReference type="GO" id="GO:0005789">
    <property type="term" value="C:endoplasmic reticulum membrane"/>
    <property type="evidence" value="ECO:0007669"/>
    <property type="project" value="UniProtKB-SubCell"/>
</dbReference>
<dbReference type="GO" id="GO:0005778">
    <property type="term" value="C:peroxisomal membrane"/>
    <property type="evidence" value="ECO:0007669"/>
    <property type="project" value="TreeGrafter"/>
</dbReference>
<dbReference type="GO" id="GO:0004420">
    <property type="term" value="F:hydroxymethylglutaryl-CoA reductase (NADPH) activity"/>
    <property type="evidence" value="ECO:0007669"/>
    <property type="project" value="UniProtKB-EC"/>
</dbReference>
<dbReference type="GO" id="GO:0015936">
    <property type="term" value="P:coenzyme A metabolic process"/>
    <property type="evidence" value="ECO:0007669"/>
    <property type="project" value="InterPro"/>
</dbReference>
<dbReference type="GO" id="GO:0008299">
    <property type="term" value="P:isoprenoid biosynthetic process"/>
    <property type="evidence" value="ECO:0007669"/>
    <property type="project" value="UniProtKB-KW"/>
</dbReference>
<dbReference type="GO" id="GO:0016126">
    <property type="term" value="P:sterol biosynthetic process"/>
    <property type="evidence" value="ECO:0007669"/>
    <property type="project" value="TreeGrafter"/>
</dbReference>
<dbReference type="CDD" id="cd00643">
    <property type="entry name" value="HMG-CoA_reductase_classI"/>
    <property type="match status" value="1"/>
</dbReference>
<dbReference type="FunFam" id="1.10.3270.10:FF:000001">
    <property type="entry name" value="3-hydroxy-3-methylglutaryl coenzyme A reductase"/>
    <property type="match status" value="1"/>
</dbReference>
<dbReference type="FunFam" id="3.30.70.420:FF:000001">
    <property type="entry name" value="3-hydroxy-3-methylglutaryl coenzyme A reductase"/>
    <property type="match status" value="1"/>
</dbReference>
<dbReference type="Gene3D" id="3.90.770.10">
    <property type="entry name" value="3-hydroxy-3-methylglutaryl-coenzyme A Reductase, Chain A, domain 2"/>
    <property type="match status" value="1"/>
</dbReference>
<dbReference type="Gene3D" id="1.10.3270.10">
    <property type="entry name" value="HMGR, N-terminal domain"/>
    <property type="match status" value="1"/>
</dbReference>
<dbReference type="Gene3D" id="3.30.70.420">
    <property type="entry name" value="Hydroxymethylglutaryl-CoA reductase, class I/II, NAD/NADP-binding domain"/>
    <property type="match status" value="1"/>
</dbReference>
<dbReference type="InterPro" id="IPR002202">
    <property type="entry name" value="HMG_CoA_Rdtase"/>
</dbReference>
<dbReference type="InterPro" id="IPR023074">
    <property type="entry name" value="HMG_CoA_Rdtase_cat_sf"/>
</dbReference>
<dbReference type="InterPro" id="IPR023076">
    <property type="entry name" value="HMG_CoA_Rdtase_CS"/>
</dbReference>
<dbReference type="InterPro" id="IPR004554">
    <property type="entry name" value="HMG_CoA_Rdtase_eu_arc"/>
</dbReference>
<dbReference type="InterPro" id="IPR023282">
    <property type="entry name" value="HMG_CoA_Rdtase_N"/>
</dbReference>
<dbReference type="InterPro" id="IPR009023">
    <property type="entry name" value="HMG_CoA_Rdtase_NAD(P)-bd_sf"/>
</dbReference>
<dbReference type="InterPro" id="IPR009029">
    <property type="entry name" value="HMG_CoA_Rdtase_sub-bd_dom_sf"/>
</dbReference>
<dbReference type="InterPro" id="IPR053958">
    <property type="entry name" value="HMGCR/SNAP/NPC1-like_SSD"/>
</dbReference>
<dbReference type="InterPro" id="IPR000731">
    <property type="entry name" value="SSD"/>
</dbReference>
<dbReference type="NCBIfam" id="TIGR00533">
    <property type="entry name" value="HMG_CoA_R_NADP"/>
    <property type="match status" value="1"/>
</dbReference>
<dbReference type="PANTHER" id="PTHR10572">
    <property type="entry name" value="3-HYDROXY-3-METHYLGLUTARYL-COENZYME A REDUCTASE"/>
    <property type="match status" value="1"/>
</dbReference>
<dbReference type="PANTHER" id="PTHR10572:SF24">
    <property type="entry name" value="3-HYDROXY-3-METHYLGLUTARYL-COENZYME A REDUCTASE"/>
    <property type="match status" value="1"/>
</dbReference>
<dbReference type="Pfam" id="PF00368">
    <property type="entry name" value="HMG-CoA_red"/>
    <property type="match status" value="1"/>
</dbReference>
<dbReference type="Pfam" id="PF12349">
    <property type="entry name" value="Sterol-sensing"/>
    <property type="match status" value="1"/>
</dbReference>
<dbReference type="PRINTS" id="PR00071">
    <property type="entry name" value="HMGCOARDTASE"/>
</dbReference>
<dbReference type="SUPFAM" id="SSF55035">
    <property type="entry name" value="NAD-binding domain of HMG-CoA reductase"/>
    <property type="match status" value="1"/>
</dbReference>
<dbReference type="SUPFAM" id="SSF56542">
    <property type="entry name" value="Substrate-binding domain of HMG-CoA reductase"/>
    <property type="match status" value="1"/>
</dbReference>
<dbReference type="PROSITE" id="PS00066">
    <property type="entry name" value="HMG_COA_REDUCTASE_1"/>
    <property type="match status" value="1"/>
</dbReference>
<dbReference type="PROSITE" id="PS00318">
    <property type="entry name" value="HMG_COA_REDUCTASE_2"/>
    <property type="match status" value="1"/>
</dbReference>
<dbReference type="PROSITE" id="PS01192">
    <property type="entry name" value="HMG_COA_REDUCTASE_3"/>
    <property type="match status" value="1"/>
</dbReference>
<dbReference type="PROSITE" id="PS50065">
    <property type="entry name" value="HMG_COA_REDUCTASE_4"/>
    <property type="match status" value="1"/>
</dbReference>
<dbReference type="PROSITE" id="PS50156">
    <property type="entry name" value="SSD"/>
    <property type="match status" value="1"/>
</dbReference>
<proteinExistence type="evidence at transcript level"/>
<accession>O76819</accession>
<name>HMDH_AGRIP</name>
<sequence length="833" mass="89790">MKVWGAHGEFCARHQWEVIVATLALLACAASVERNGPGNRSEHCAGWARACPGLEAEYQAADAVIMTFVRCAALLYAYYQISNLHKIASKYLLIIAGVFSTFASFIFTSAVASLFWSELASIKDAPFLFLLVADVARGARMAKAGWSAGEDQGKRVGRALALLGPTATLDTLLAVLLVGVGALSGVPRLEHMCTFACLALLVDYLVFVTFYPACLSLVADFASGRKEMSPDSPFSEADLKPNPVVQRVKMIMAAGLLCVHLTSRWPWSSDNGIIEGPTDTLTPTSNDNILLHSYVKWFSVSADYIVIATLLCALIIKFVFFEEQRNWVIDMNDMTVKEVVQEQARSKPKFSVGDDSNSEVSTQTEGVLEDEWPTLSPSSSAAKLNSKKRPMAECLEIYRSEGACVSLSDEEVVMLVEQSHIPLHRLEAVLGDPLRGVRLRRKVVGARFQTELAIKQLPYLNYDYSKVLNACCENVIGYVGVPVGYAGPLVVDGKPYMIPMATTEGALVASTNRGAKAIGIRGVTSVVEDVGMTRAPAIKLPNVVRAHECRQWIDNKDNYAVIKEAFDSTSRFARLQEIHIGVDGATLYLRFRATTGDAMGMNMVSKGAENALKLLKNYFPDMEVISLSGNYCSDKKAAAINWVKGRGKRVVCETTITSDSLRTIFKTDAKTLARCNKIKNLSGSALAGSIGGNNAHAANMVTAIYIATGQDPAQNVTSSNCSTNMEVCGENGEDLYVTCTMPSLEVGTVGGGTILTGQGACLDILGVKGAGARPAENSARLASLICATVLAGELSLMAALVNSDLVKSHMRHNRSTVNVQVQAENITLKVPTL</sequence>